<dbReference type="EMBL" id="CP000922">
    <property type="protein sequence ID" value="ACJ34106.1"/>
    <property type="molecule type" value="Genomic_DNA"/>
</dbReference>
<dbReference type="RefSeq" id="WP_006323041.1">
    <property type="nucleotide sequence ID" value="NC_011567.1"/>
</dbReference>
<dbReference type="SMR" id="B7GGC4"/>
<dbReference type="STRING" id="491915.Aflv_1745"/>
<dbReference type="GeneID" id="7037998"/>
<dbReference type="KEGG" id="afl:Aflv_1745"/>
<dbReference type="eggNOG" id="COG4465">
    <property type="taxonomic scope" value="Bacteria"/>
</dbReference>
<dbReference type="HOGENOM" id="CLU_089581_0_0_9"/>
<dbReference type="Proteomes" id="UP000000742">
    <property type="component" value="Chromosome"/>
</dbReference>
<dbReference type="GO" id="GO:0005737">
    <property type="term" value="C:cytoplasm"/>
    <property type="evidence" value="ECO:0007669"/>
    <property type="project" value="UniProtKB-SubCell"/>
</dbReference>
<dbReference type="GO" id="GO:0003677">
    <property type="term" value="F:DNA binding"/>
    <property type="evidence" value="ECO:0007669"/>
    <property type="project" value="UniProtKB-UniRule"/>
</dbReference>
<dbReference type="GO" id="GO:0003700">
    <property type="term" value="F:DNA-binding transcription factor activity"/>
    <property type="evidence" value="ECO:0007669"/>
    <property type="project" value="InterPro"/>
</dbReference>
<dbReference type="GO" id="GO:0005525">
    <property type="term" value="F:GTP binding"/>
    <property type="evidence" value="ECO:0007669"/>
    <property type="project" value="InterPro"/>
</dbReference>
<dbReference type="GO" id="GO:0045892">
    <property type="term" value="P:negative regulation of DNA-templated transcription"/>
    <property type="evidence" value="ECO:0007669"/>
    <property type="project" value="UniProtKB-UniRule"/>
</dbReference>
<dbReference type="FunFam" id="1.10.10.10:FF:000034">
    <property type="entry name" value="GTP-sensing transcriptional pleiotropic repressor CodY"/>
    <property type="match status" value="1"/>
</dbReference>
<dbReference type="FunFam" id="3.30.450.40:FF:000003">
    <property type="entry name" value="GTP-sensing transcriptional pleiotropic repressor CodY"/>
    <property type="match status" value="1"/>
</dbReference>
<dbReference type="Gene3D" id="3.30.450.40">
    <property type="match status" value="1"/>
</dbReference>
<dbReference type="Gene3D" id="1.10.10.10">
    <property type="entry name" value="Winged helix-like DNA-binding domain superfamily/Winged helix DNA-binding domain"/>
    <property type="match status" value="1"/>
</dbReference>
<dbReference type="HAMAP" id="MF_00621">
    <property type="entry name" value="HTH_type_CodY"/>
    <property type="match status" value="1"/>
</dbReference>
<dbReference type="InterPro" id="IPR014154">
    <property type="entry name" value="CodY"/>
</dbReference>
<dbReference type="InterPro" id="IPR029016">
    <property type="entry name" value="GAF-like_dom_sf"/>
</dbReference>
<dbReference type="InterPro" id="IPR013198">
    <property type="entry name" value="GTP_trans_reg_CodY_C"/>
</dbReference>
<dbReference type="InterPro" id="IPR010312">
    <property type="entry name" value="Transc_reg_CodY_N"/>
</dbReference>
<dbReference type="InterPro" id="IPR036388">
    <property type="entry name" value="WH-like_DNA-bd_sf"/>
</dbReference>
<dbReference type="InterPro" id="IPR036390">
    <property type="entry name" value="WH_DNA-bd_sf"/>
</dbReference>
<dbReference type="NCBIfam" id="TIGR02787">
    <property type="entry name" value="codY_Gpos"/>
    <property type="match status" value="1"/>
</dbReference>
<dbReference type="NCBIfam" id="NF003170">
    <property type="entry name" value="PRK04158.1"/>
    <property type="match status" value="1"/>
</dbReference>
<dbReference type="PANTHER" id="PTHR40062:SF1">
    <property type="entry name" value="GLOBAL TRANSCRIPTIONAL REGULATOR CODY"/>
    <property type="match status" value="1"/>
</dbReference>
<dbReference type="PANTHER" id="PTHR40062">
    <property type="entry name" value="GTP-SENSING TRANSCRIPTIONAL PLEIOTROPIC REPRESSOR CODY"/>
    <property type="match status" value="1"/>
</dbReference>
<dbReference type="Pfam" id="PF06018">
    <property type="entry name" value="CodY"/>
    <property type="match status" value="1"/>
</dbReference>
<dbReference type="Pfam" id="PF08222">
    <property type="entry name" value="HTH_CodY"/>
    <property type="match status" value="1"/>
</dbReference>
<dbReference type="PIRSF" id="PIRSF011572">
    <property type="entry name" value="GTP_sensing_CodY"/>
    <property type="match status" value="1"/>
</dbReference>
<dbReference type="SUPFAM" id="SSF46785">
    <property type="entry name" value="Winged helix' DNA-binding domain"/>
    <property type="match status" value="1"/>
</dbReference>
<proteinExistence type="inferred from homology"/>
<reference key="1">
    <citation type="journal article" date="2008" name="Genome Biol.">
        <title>Encapsulated in silica: genome, proteome and physiology of the thermophilic bacterium Anoxybacillus flavithermus WK1.</title>
        <authorList>
            <person name="Saw J.H."/>
            <person name="Mountain B.W."/>
            <person name="Feng L."/>
            <person name="Omelchenko M.V."/>
            <person name="Hou S."/>
            <person name="Saito J.A."/>
            <person name="Stott M.B."/>
            <person name="Li D."/>
            <person name="Zhao G."/>
            <person name="Wu J."/>
            <person name="Galperin M.Y."/>
            <person name="Koonin E.V."/>
            <person name="Makarova K.S."/>
            <person name="Wolf Y.I."/>
            <person name="Rigden D.J."/>
            <person name="Dunfield P.F."/>
            <person name="Wang L."/>
            <person name="Alam M."/>
        </authorList>
    </citation>
    <scope>NUCLEOTIDE SEQUENCE [LARGE SCALE GENOMIC DNA]</scope>
    <source>
        <strain>DSM 21510 / WK1</strain>
    </source>
</reference>
<evidence type="ECO:0000255" key="1">
    <source>
        <dbReference type="HAMAP-Rule" id="MF_00621"/>
    </source>
</evidence>
<name>CODY_ANOFW</name>
<feature type="chain" id="PRO_1000130445" description="Global transcriptional regulator CodY">
    <location>
        <begin position="1"/>
        <end position="259"/>
    </location>
</feature>
<feature type="DNA-binding region" description="H-T-H motif" evidence="1">
    <location>
        <begin position="203"/>
        <end position="222"/>
    </location>
</feature>
<feature type="region of interest" description="GAF domain" evidence="1">
    <location>
        <begin position="1"/>
        <end position="155"/>
    </location>
</feature>
<feature type="modified residue" description="Phosphoserine" evidence="1">
    <location>
        <position position="215"/>
    </location>
</feature>
<protein>
    <recommendedName>
        <fullName evidence="1">Global transcriptional regulator CodY</fullName>
    </recommendedName>
</protein>
<keyword id="KW-0963">Cytoplasm</keyword>
<keyword id="KW-0238">DNA-binding</keyword>
<keyword id="KW-0597">Phosphoprotein</keyword>
<keyword id="KW-0678">Repressor</keyword>
<keyword id="KW-0804">Transcription</keyword>
<keyword id="KW-0805">Transcription regulation</keyword>
<gene>
    <name evidence="1" type="primary">codY</name>
    <name type="ordered locus">Aflv_1745</name>
</gene>
<comment type="function">
    <text evidence="1">DNA-binding global transcriptional regulator which is involved in the adaptive response to starvation and acts by directly or indirectly controlling the expression of numerous genes in response to nutrient availability. During rapid exponential growth, CodY is highly active and represses genes whose products allow adaptation to nutrient depletion.</text>
</comment>
<comment type="subcellular location">
    <subcellularLocation>
        <location evidence="1">Cytoplasm</location>
    </subcellularLocation>
</comment>
<comment type="similarity">
    <text evidence="1">Belongs to the CodY family.</text>
</comment>
<sequence>MNLLEKTRKINAMLQNAAGKPVNFKEMAETLCEVIEANVFVLSRRGKLLGFAIKQTIENERMKKMLADRQFPEEYTKNLFNITETSPNLDINSEYTAFPVENKDLFKNGLTTIVPIIGGGERLGTLILSRLDKEFHDDDLILAEYGATVVGMEILREKAEEIEEEARSKAVVQMAISSLSYSELEAIEHIFEELDGTEGLLVASKIADRVGITRSVIVNALRKLESAGVIESRSLGMKGTYIKVLNDKFLTELEKLKHH</sequence>
<organism>
    <name type="scientific">Anoxybacillus flavithermus (strain DSM 21510 / WK1)</name>
    <dbReference type="NCBI Taxonomy" id="491915"/>
    <lineage>
        <taxon>Bacteria</taxon>
        <taxon>Bacillati</taxon>
        <taxon>Bacillota</taxon>
        <taxon>Bacilli</taxon>
        <taxon>Bacillales</taxon>
        <taxon>Anoxybacillaceae</taxon>
        <taxon>Anoxybacillus</taxon>
    </lineage>
</organism>
<accession>B7GGC4</accession>